<organism>
    <name type="scientific">Paramecium tetraurelia</name>
    <dbReference type="NCBI Taxonomy" id="5888"/>
    <lineage>
        <taxon>Eukaryota</taxon>
        <taxon>Sar</taxon>
        <taxon>Alveolata</taxon>
        <taxon>Ciliophora</taxon>
        <taxon>Intramacronucleata</taxon>
        <taxon>Oligohymenophorea</taxon>
        <taxon>Peniculida</taxon>
        <taxon>Parameciidae</taxon>
        <taxon>Paramecium</taxon>
    </lineage>
</organism>
<dbReference type="EMBL" id="CT868041">
    <property type="protein sequence ID" value="CAK65941.1"/>
    <property type="molecule type" value="Genomic_DNA"/>
</dbReference>
<dbReference type="RefSeq" id="XP_001433338.1">
    <property type="nucleotide sequence ID" value="XM_001433301.1"/>
</dbReference>
<dbReference type="SMR" id="A0C574"/>
<dbReference type="FunCoup" id="A0C574">
    <property type="interactions" value="530"/>
</dbReference>
<dbReference type="STRING" id="5888.A0C574"/>
<dbReference type="EnsemblProtists" id="CAK65941">
    <property type="protein sequence ID" value="CAK65941"/>
    <property type="gene ID" value="GSPATT00006440001"/>
</dbReference>
<dbReference type="GeneID" id="5019123"/>
<dbReference type="KEGG" id="ptm:GSPATT00006440001"/>
<dbReference type="eggNOG" id="KOG1071">
    <property type="taxonomic scope" value="Eukaryota"/>
</dbReference>
<dbReference type="HOGENOM" id="CLU_047155_0_0_1"/>
<dbReference type="InParanoid" id="A0C574"/>
<dbReference type="OMA" id="YLHRCPR"/>
<dbReference type="OrthoDB" id="277235at2759"/>
<dbReference type="Proteomes" id="UP000000600">
    <property type="component" value="Partially assembled WGS sequence"/>
</dbReference>
<dbReference type="GO" id="GO:0005739">
    <property type="term" value="C:mitochondrion"/>
    <property type="evidence" value="ECO:0007669"/>
    <property type="project" value="UniProtKB-SubCell"/>
</dbReference>
<dbReference type="GO" id="GO:0003746">
    <property type="term" value="F:translation elongation factor activity"/>
    <property type="evidence" value="ECO:0000318"/>
    <property type="project" value="GO_Central"/>
</dbReference>
<dbReference type="GO" id="GO:0070125">
    <property type="term" value="P:mitochondrial translational elongation"/>
    <property type="evidence" value="ECO:0000318"/>
    <property type="project" value="GO_Central"/>
</dbReference>
<dbReference type="CDD" id="cd14275">
    <property type="entry name" value="UBA_EF-Ts"/>
    <property type="match status" value="1"/>
</dbReference>
<dbReference type="FunFam" id="1.10.8.10:FF:000001">
    <property type="entry name" value="Elongation factor Ts"/>
    <property type="match status" value="1"/>
</dbReference>
<dbReference type="Gene3D" id="1.10.286.20">
    <property type="match status" value="1"/>
</dbReference>
<dbReference type="Gene3D" id="1.10.8.10">
    <property type="entry name" value="DNA helicase RuvA subunit, C-terminal domain"/>
    <property type="match status" value="1"/>
</dbReference>
<dbReference type="Gene3D" id="3.30.479.20">
    <property type="entry name" value="Elongation factor Ts, dimerisation domain"/>
    <property type="match status" value="2"/>
</dbReference>
<dbReference type="HAMAP" id="MF_00050">
    <property type="entry name" value="EF_Ts"/>
    <property type="match status" value="1"/>
</dbReference>
<dbReference type="InterPro" id="IPR036402">
    <property type="entry name" value="EF-Ts_dimer_sf"/>
</dbReference>
<dbReference type="InterPro" id="IPR001816">
    <property type="entry name" value="Transl_elong_EFTs/EF1B"/>
</dbReference>
<dbReference type="InterPro" id="IPR014039">
    <property type="entry name" value="Transl_elong_EFTs/EF1B_dimer"/>
</dbReference>
<dbReference type="InterPro" id="IPR018101">
    <property type="entry name" value="Transl_elong_Ts_CS"/>
</dbReference>
<dbReference type="InterPro" id="IPR009060">
    <property type="entry name" value="UBA-like_sf"/>
</dbReference>
<dbReference type="NCBIfam" id="TIGR00116">
    <property type="entry name" value="tsf"/>
    <property type="match status" value="1"/>
</dbReference>
<dbReference type="PANTHER" id="PTHR11741">
    <property type="entry name" value="ELONGATION FACTOR TS"/>
    <property type="match status" value="1"/>
</dbReference>
<dbReference type="PANTHER" id="PTHR11741:SF0">
    <property type="entry name" value="ELONGATION FACTOR TS, MITOCHONDRIAL"/>
    <property type="match status" value="1"/>
</dbReference>
<dbReference type="Pfam" id="PF00889">
    <property type="entry name" value="EF_TS"/>
    <property type="match status" value="1"/>
</dbReference>
<dbReference type="SUPFAM" id="SSF54713">
    <property type="entry name" value="Elongation factor Ts (EF-Ts), dimerisation domain"/>
    <property type="match status" value="1"/>
</dbReference>
<dbReference type="SUPFAM" id="SSF46934">
    <property type="entry name" value="UBA-like"/>
    <property type="match status" value="1"/>
</dbReference>
<dbReference type="PROSITE" id="PS01127">
    <property type="entry name" value="EF_TS_2"/>
    <property type="match status" value="1"/>
</dbReference>
<comment type="function">
    <text evidence="1">Associates with the EF-Tu.GDP complex and induces the exchange of GDP to GTP. It remains bound to the aminoacyl-tRNA.EF-Tu.GTP complex up to the GTP hydrolysis stage on the ribosome.</text>
</comment>
<comment type="subcellular location">
    <subcellularLocation>
        <location evidence="1">Mitochondrion</location>
    </subcellularLocation>
</comment>
<comment type="miscellaneous">
    <text evidence="1">This protein may be expected to contain an N-terminal transit peptide but none has been predicted.</text>
</comment>
<comment type="similarity">
    <text evidence="1">Belongs to the EF-Ts family.</text>
</comment>
<proteinExistence type="inferred from homology"/>
<name>EFTS2_PARTE</name>
<evidence type="ECO:0000255" key="1">
    <source>
        <dbReference type="HAMAP-Rule" id="MF_03135"/>
    </source>
</evidence>
<gene>
    <name type="ORF">GSPATT00006440001</name>
</gene>
<reference key="1">
    <citation type="journal article" date="2006" name="Nature">
        <title>Global trends of whole-genome duplications revealed by the ciliate Paramecium tetraurelia.</title>
        <authorList>
            <person name="Aury J.-M."/>
            <person name="Jaillon O."/>
            <person name="Duret L."/>
            <person name="Noel B."/>
            <person name="Jubin C."/>
            <person name="Porcel B.M."/>
            <person name="Segurens B."/>
            <person name="Daubin V."/>
            <person name="Anthouard V."/>
            <person name="Aiach N."/>
            <person name="Arnaiz O."/>
            <person name="Billaut A."/>
            <person name="Beisson J."/>
            <person name="Blanc I."/>
            <person name="Bouhouche K."/>
            <person name="Camara F."/>
            <person name="Duharcourt S."/>
            <person name="Guigo R."/>
            <person name="Gogendeau D."/>
            <person name="Katinka M."/>
            <person name="Keller A.-M."/>
            <person name="Kissmehl R."/>
            <person name="Klotz C."/>
            <person name="Koll F."/>
            <person name="Le Mouel A."/>
            <person name="Lepere G."/>
            <person name="Malinsky S."/>
            <person name="Nowacki M."/>
            <person name="Nowak J.K."/>
            <person name="Plattner H."/>
            <person name="Poulain J."/>
            <person name="Ruiz F."/>
            <person name="Serrano V."/>
            <person name="Zagulski M."/>
            <person name="Dessen P."/>
            <person name="Betermier M."/>
            <person name="Weissenbach J."/>
            <person name="Scarpelli C."/>
            <person name="Schaechter V."/>
            <person name="Sperling L."/>
            <person name="Meyer E."/>
            <person name="Cohen J."/>
            <person name="Wincker P."/>
        </authorList>
    </citation>
    <scope>NUCLEOTIDE SEQUENCE [LARGE SCALE GENOMIC DNA]</scope>
    <source>
        <strain>Stock d4-2</strain>
    </source>
</reference>
<feature type="chain" id="PRO_0000402332" description="Elongation factor Ts, mitochondrial 2">
    <location>
        <begin position="1"/>
        <end position="294"/>
    </location>
</feature>
<keyword id="KW-0251">Elongation factor</keyword>
<keyword id="KW-0496">Mitochondrion</keyword>
<keyword id="KW-0648">Protein biosynthesis</keyword>
<keyword id="KW-1185">Reference proteome</keyword>
<sequence length="294" mass="33354">MFRKIYTNISITLIKQLREASGSPINDCKKALESTDGNFEKAIQYLKERGLAQAEKKMGNQTKQGVIVAYTNNKVAALAEINCETDFVARTSEFLEFSTNFIKTIVNQEQDFSSSNIDSVLNDKRKQLVGKLQENIVIGNLNAFVATKNSVFGVYQHNCLKNTICGLGGSVVELITESELTDVKTQILREGANNLAVTYLGLKPRFLYQHEVSSDVVDQIRKEVEKEFGSKTAQQQNFIVKGKLQNYYSDNVFEHQEYFLNEDEPKTIKQYMAKELEEVIKDKVKIGRCLYLTI</sequence>
<accession>A0C574</accession>
<protein>
    <recommendedName>
        <fullName evidence="1">Elongation factor Ts, mitochondrial 2</fullName>
        <shortName evidence="1">EF-Ts 2</shortName>
        <shortName evidence="1">EF-TsMt 2</shortName>
    </recommendedName>
</protein>